<dbReference type="EMBL" id="CP001649">
    <property type="protein sequence ID" value="ACS81505.1"/>
    <property type="molecule type" value="Genomic_DNA"/>
</dbReference>
<dbReference type="RefSeq" id="WP_015853321.1">
    <property type="nucleotide sequence ID" value="NC_012881.1"/>
</dbReference>
<dbReference type="SMR" id="C6BSP9"/>
<dbReference type="STRING" id="526222.Desal_3457"/>
<dbReference type="KEGG" id="dsa:Desal_3457"/>
<dbReference type="eggNOG" id="COG0712">
    <property type="taxonomic scope" value="Bacteria"/>
</dbReference>
<dbReference type="HOGENOM" id="CLU_085114_4_1_7"/>
<dbReference type="OrthoDB" id="9802471at2"/>
<dbReference type="Proteomes" id="UP000002601">
    <property type="component" value="Chromosome"/>
</dbReference>
<dbReference type="GO" id="GO:0005886">
    <property type="term" value="C:plasma membrane"/>
    <property type="evidence" value="ECO:0007669"/>
    <property type="project" value="UniProtKB-SubCell"/>
</dbReference>
<dbReference type="GO" id="GO:0045259">
    <property type="term" value="C:proton-transporting ATP synthase complex"/>
    <property type="evidence" value="ECO:0007669"/>
    <property type="project" value="UniProtKB-KW"/>
</dbReference>
<dbReference type="GO" id="GO:0046933">
    <property type="term" value="F:proton-transporting ATP synthase activity, rotational mechanism"/>
    <property type="evidence" value="ECO:0007669"/>
    <property type="project" value="UniProtKB-UniRule"/>
</dbReference>
<dbReference type="Gene3D" id="1.10.520.20">
    <property type="entry name" value="N-terminal domain of the delta subunit of the F1F0-ATP synthase"/>
    <property type="match status" value="1"/>
</dbReference>
<dbReference type="HAMAP" id="MF_01416">
    <property type="entry name" value="ATP_synth_delta_bact"/>
    <property type="match status" value="1"/>
</dbReference>
<dbReference type="InterPro" id="IPR026015">
    <property type="entry name" value="ATP_synth_OSCP/delta_N_sf"/>
</dbReference>
<dbReference type="InterPro" id="IPR020781">
    <property type="entry name" value="ATPase_OSCP/d_CS"/>
</dbReference>
<dbReference type="InterPro" id="IPR000711">
    <property type="entry name" value="ATPase_OSCP/dsu"/>
</dbReference>
<dbReference type="NCBIfam" id="TIGR01145">
    <property type="entry name" value="ATP_synt_delta"/>
    <property type="match status" value="1"/>
</dbReference>
<dbReference type="NCBIfam" id="NF004402">
    <property type="entry name" value="PRK05758.2-2"/>
    <property type="match status" value="1"/>
</dbReference>
<dbReference type="PANTHER" id="PTHR11910">
    <property type="entry name" value="ATP SYNTHASE DELTA CHAIN"/>
    <property type="match status" value="1"/>
</dbReference>
<dbReference type="Pfam" id="PF00213">
    <property type="entry name" value="OSCP"/>
    <property type="match status" value="1"/>
</dbReference>
<dbReference type="PRINTS" id="PR00125">
    <property type="entry name" value="ATPASEDELTA"/>
</dbReference>
<dbReference type="SUPFAM" id="SSF47928">
    <property type="entry name" value="N-terminal domain of the delta subunit of the F1F0-ATP synthase"/>
    <property type="match status" value="1"/>
</dbReference>
<dbReference type="PROSITE" id="PS00389">
    <property type="entry name" value="ATPASE_DELTA"/>
    <property type="match status" value="1"/>
</dbReference>
<evidence type="ECO:0000255" key="1">
    <source>
        <dbReference type="HAMAP-Rule" id="MF_01416"/>
    </source>
</evidence>
<sequence>MTGNIVSRRYAKALFSVGQKQGEEDLAAYGLALTELSQILEDSPEALRLFQNPVFSADEKKAVLEKLLEKTSAGPVVKNFCSLLADKGRLPVIPEIASDYAGMLDNVQGVVRGKLVTAIKLTVKRQKEIKTRLEEQLKSKLELDFAMDKDILGGVVLQVGDKVLDASIRAQLQMMKEQIKRGV</sequence>
<feature type="chain" id="PRO_1000215232" description="ATP synthase subunit delta">
    <location>
        <begin position="1"/>
        <end position="183"/>
    </location>
</feature>
<name>ATPD_MARSD</name>
<reference key="1">
    <citation type="submission" date="2009-06" db="EMBL/GenBank/DDBJ databases">
        <title>Complete sequence of Desulfovibrio salexigens DSM 2638.</title>
        <authorList>
            <consortium name="US DOE Joint Genome Institute"/>
            <person name="Lucas S."/>
            <person name="Copeland A."/>
            <person name="Lapidus A."/>
            <person name="Glavina del Rio T."/>
            <person name="Tice H."/>
            <person name="Bruce D."/>
            <person name="Goodwin L."/>
            <person name="Pitluck S."/>
            <person name="Munk A.C."/>
            <person name="Brettin T."/>
            <person name="Detter J.C."/>
            <person name="Han C."/>
            <person name="Tapia R."/>
            <person name="Larimer F."/>
            <person name="Land M."/>
            <person name="Hauser L."/>
            <person name="Kyrpides N."/>
            <person name="Anderson I."/>
            <person name="Wall J.D."/>
            <person name="Arkin A.P."/>
            <person name="Dehal P."/>
            <person name="Chivian D."/>
            <person name="Giles B."/>
            <person name="Hazen T.C."/>
        </authorList>
    </citation>
    <scope>NUCLEOTIDE SEQUENCE [LARGE SCALE GENOMIC DNA]</scope>
    <source>
        <strain>ATCC 14822 / DSM 2638 / NCIMB 8403 / VKM B-1763</strain>
    </source>
</reference>
<comment type="function">
    <text evidence="1">F(1)F(0) ATP synthase produces ATP from ADP in the presence of a proton or sodium gradient. F-type ATPases consist of two structural domains, F(1) containing the extramembraneous catalytic core and F(0) containing the membrane proton channel, linked together by a central stalk and a peripheral stalk. During catalysis, ATP synthesis in the catalytic domain of F(1) is coupled via a rotary mechanism of the central stalk subunits to proton translocation.</text>
</comment>
<comment type="function">
    <text evidence="1">This protein is part of the stalk that links CF(0) to CF(1). It either transmits conformational changes from CF(0) to CF(1) or is implicated in proton conduction.</text>
</comment>
<comment type="subunit">
    <text evidence="1">F-type ATPases have 2 components, F(1) - the catalytic core - and F(0) - the membrane proton channel. F(1) has five subunits: alpha(3), beta(3), gamma(1), delta(1), epsilon(1). F(0) has three main subunits: a(1), b(2) and c(10-14). The alpha and beta chains form an alternating ring which encloses part of the gamma chain. F(1) is attached to F(0) by a central stalk formed by the gamma and epsilon chains, while a peripheral stalk is formed by the delta and b chains.</text>
</comment>
<comment type="subcellular location">
    <subcellularLocation>
        <location evidence="1">Cell inner membrane</location>
        <topology evidence="1">Peripheral membrane protein</topology>
    </subcellularLocation>
</comment>
<comment type="similarity">
    <text evidence="1">Belongs to the ATPase delta chain family.</text>
</comment>
<gene>
    <name evidence="1" type="primary">atpH</name>
    <name type="ordered locus">Desal_3457</name>
</gene>
<keyword id="KW-0066">ATP synthesis</keyword>
<keyword id="KW-0997">Cell inner membrane</keyword>
<keyword id="KW-1003">Cell membrane</keyword>
<keyword id="KW-0139">CF(1)</keyword>
<keyword id="KW-0375">Hydrogen ion transport</keyword>
<keyword id="KW-0406">Ion transport</keyword>
<keyword id="KW-0472">Membrane</keyword>
<keyword id="KW-1185">Reference proteome</keyword>
<keyword id="KW-0813">Transport</keyword>
<organism>
    <name type="scientific">Maridesulfovibrio salexigens (strain ATCC 14822 / DSM 2638 / NCIMB 8403 / VKM B-1763)</name>
    <name type="common">Desulfovibrio salexigens</name>
    <dbReference type="NCBI Taxonomy" id="526222"/>
    <lineage>
        <taxon>Bacteria</taxon>
        <taxon>Pseudomonadati</taxon>
        <taxon>Thermodesulfobacteriota</taxon>
        <taxon>Desulfovibrionia</taxon>
        <taxon>Desulfovibrionales</taxon>
        <taxon>Desulfovibrionaceae</taxon>
        <taxon>Maridesulfovibrio</taxon>
    </lineage>
</organism>
<proteinExistence type="inferred from homology"/>
<accession>C6BSP9</accession>
<protein>
    <recommendedName>
        <fullName evidence="1">ATP synthase subunit delta</fullName>
    </recommendedName>
    <alternativeName>
        <fullName evidence="1">ATP synthase F(1) sector subunit delta</fullName>
    </alternativeName>
    <alternativeName>
        <fullName evidence="1">F-type ATPase subunit delta</fullName>
        <shortName evidence="1">F-ATPase subunit delta</shortName>
    </alternativeName>
</protein>